<geneLocation type="chloroplast"/>
<keyword id="KW-0150">Chloroplast</keyword>
<keyword id="KW-0934">Plastid</keyword>
<keyword id="KW-0687">Ribonucleoprotein</keyword>
<keyword id="KW-0689">Ribosomal protein</keyword>
<keyword id="KW-0694">RNA-binding</keyword>
<keyword id="KW-0699">rRNA-binding</keyword>
<dbReference type="EMBL" id="DQ400350">
    <property type="protein sequence ID" value="ABD48534.1"/>
    <property type="molecule type" value="Genomic_DNA"/>
</dbReference>
<dbReference type="RefSeq" id="YP_001595547.1">
    <property type="nucleotide sequence ID" value="NC_010109.1"/>
</dbReference>
<dbReference type="SMR" id="A9L9D5"/>
<dbReference type="GeneID" id="5787559"/>
<dbReference type="GO" id="GO:0009507">
    <property type="term" value="C:chloroplast"/>
    <property type="evidence" value="ECO:0007669"/>
    <property type="project" value="UniProtKB-SubCell"/>
</dbReference>
<dbReference type="GO" id="GO:0015934">
    <property type="term" value="C:large ribosomal subunit"/>
    <property type="evidence" value="ECO:0007669"/>
    <property type="project" value="InterPro"/>
</dbReference>
<dbReference type="GO" id="GO:0019843">
    <property type="term" value="F:rRNA binding"/>
    <property type="evidence" value="ECO:0007669"/>
    <property type="project" value="UniProtKB-UniRule"/>
</dbReference>
<dbReference type="GO" id="GO:0003735">
    <property type="term" value="F:structural constituent of ribosome"/>
    <property type="evidence" value="ECO:0007669"/>
    <property type="project" value="InterPro"/>
</dbReference>
<dbReference type="GO" id="GO:0006412">
    <property type="term" value="P:translation"/>
    <property type="evidence" value="ECO:0007669"/>
    <property type="project" value="UniProtKB-UniRule"/>
</dbReference>
<dbReference type="CDD" id="cd00336">
    <property type="entry name" value="Ribosomal_L22"/>
    <property type="match status" value="1"/>
</dbReference>
<dbReference type="FunFam" id="3.90.470.10:FF:000004">
    <property type="entry name" value="50S ribosomal protein L22, chloroplastic"/>
    <property type="match status" value="1"/>
</dbReference>
<dbReference type="Gene3D" id="3.90.470.10">
    <property type="entry name" value="Ribosomal protein L22/L17"/>
    <property type="match status" value="1"/>
</dbReference>
<dbReference type="HAMAP" id="MF_01331_B">
    <property type="entry name" value="Ribosomal_uL22_B"/>
    <property type="match status" value="1"/>
</dbReference>
<dbReference type="InterPro" id="IPR001063">
    <property type="entry name" value="Ribosomal_uL22"/>
</dbReference>
<dbReference type="InterPro" id="IPR005727">
    <property type="entry name" value="Ribosomal_uL22_bac/chlpt-type"/>
</dbReference>
<dbReference type="InterPro" id="IPR047867">
    <property type="entry name" value="Ribosomal_uL22_bac/org-type"/>
</dbReference>
<dbReference type="InterPro" id="IPR018260">
    <property type="entry name" value="Ribosomal_uL22_CS"/>
</dbReference>
<dbReference type="InterPro" id="IPR036394">
    <property type="entry name" value="Ribosomal_uL22_sf"/>
</dbReference>
<dbReference type="NCBIfam" id="TIGR01044">
    <property type="entry name" value="rplV_bact"/>
    <property type="match status" value="1"/>
</dbReference>
<dbReference type="PANTHER" id="PTHR13501">
    <property type="entry name" value="CHLOROPLAST 50S RIBOSOMAL PROTEIN L22-RELATED"/>
    <property type="match status" value="1"/>
</dbReference>
<dbReference type="PANTHER" id="PTHR13501:SF10">
    <property type="entry name" value="LARGE RIBOSOMAL SUBUNIT PROTEIN UL22M"/>
    <property type="match status" value="1"/>
</dbReference>
<dbReference type="Pfam" id="PF00237">
    <property type="entry name" value="Ribosomal_L22"/>
    <property type="match status" value="1"/>
</dbReference>
<dbReference type="SUPFAM" id="SSF54843">
    <property type="entry name" value="Ribosomal protein L22"/>
    <property type="match status" value="1"/>
</dbReference>
<dbReference type="PROSITE" id="PS00464">
    <property type="entry name" value="RIBOSOMAL_L22"/>
    <property type="match status" value="1"/>
</dbReference>
<proteinExistence type="inferred from homology"/>
<sequence>MVTKNSTRTEVKALAQNIHMSPFKARRVIDQIRGRSYEETLMILELMPYRAAFTILKLVYSAAANANNLGLNEAESFISKAEVNGGTVLKRLRPRARGRSYRIKRPTCHITIVLKDKSKNL</sequence>
<organism>
    <name type="scientific">Lemna minor</name>
    <name type="common">Common duckweed</name>
    <dbReference type="NCBI Taxonomy" id="4472"/>
    <lineage>
        <taxon>Eukaryota</taxon>
        <taxon>Viridiplantae</taxon>
        <taxon>Streptophyta</taxon>
        <taxon>Embryophyta</taxon>
        <taxon>Tracheophyta</taxon>
        <taxon>Spermatophyta</taxon>
        <taxon>Magnoliopsida</taxon>
        <taxon>Liliopsida</taxon>
        <taxon>Araceae</taxon>
        <taxon>Lemnoideae</taxon>
        <taxon>Lemna</taxon>
    </lineage>
</organism>
<evidence type="ECO:0000250" key="1"/>
<evidence type="ECO:0000305" key="2"/>
<accession>A9L9D5</accession>
<feature type="chain" id="PRO_0000354578" description="Large ribosomal subunit protein uL22c">
    <location>
        <begin position="1"/>
        <end position="121"/>
    </location>
</feature>
<reference key="1">
    <citation type="journal article" date="2008" name="J. Mol. Evol.">
        <title>Complete sequence of the Duckweed (Lemna minor) chloroplast genome: structural organization and phylogenetic relationships to other angiosperms.</title>
        <authorList>
            <person name="Mardanov A.V."/>
            <person name="Ravin N.V."/>
            <person name="Kuznetsov B.B."/>
            <person name="Samigullin T.H."/>
            <person name="Antonov A.S."/>
            <person name="Kolganova T.V."/>
            <person name="Skyabin K.G."/>
        </authorList>
    </citation>
    <scope>NUCLEOTIDE SEQUENCE [LARGE SCALE GENOMIC DNA]</scope>
</reference>
<gene>
    <name type="primary">rpl22</name>
</gene>
<comment type="function">
    <text evidence="1">This protein binds specifically to 23S rRNA.</text>
</comment>
<comment type="function">
    <text evidence="1">The globular domain of the protein is located near the polypeptide exit tunnel on the outside of the subunit, while an extended beta-hairpin is found that lines the wall of the exit tunnel in the center of the 70S ribosome.</text>
</comment>
<comment type="subunit">
    <text evidence="1">Part of the 50S ribosomal subunit.</text>
</comment>
<comment type="subcellular location">
    <subcellularLocation>
        <location>Plastid</location>
        <location>Chloroplast</location>
    </subcellularLocation>
</comment>
<comment type="similarity">
    <text evidence="2">Belongs to the universal ribosomal protein uL22 family.</text>
</comment>
<protein>
    <recommendedName>
        <fullName evidence="2">Large ribosomal subunit protein uL22c</fullName>
    </recommendedName>
    <alternativeName>
        <fullName>50S ribosomal protein L22, chloroplastic</fullName>
    </alternativeName>
</protein>
<name>RK22_LEMMI</name>